<organism>
    <name type="scientific">Acinetobacter baumannii (strain AB0057)</name>
    <dbReference type="NCBI Taxonomy" id="480119"/>
    <lineage>
        <taxon>Bacteria</taxon>
        <taxon>Pseudomonadati</taxon>
        <taxon>Pseudomonadota</taxon>
        <taxon>Gammaproteobacteria</taxon>
        <taxon>Moraxellales</taxon>
        <taxon>Moraxellaceae</taxon>
        <taxon>Acinetobacter</taxon>
        <taxon>Acinetobacter calcoaceticus/baumannii complex</taxon>
    </lineage>
</organism>
<reference key="1">
    <citation type="journal article" date="2008" name="J. Bacteriol.">
        <title>Comparative genome sequence analysis of multidrug-resistant Acinetobacter baumannii.</title>
        <authorList>
            <person name="Adams M.D."/>
            <person name="Goglin K."/>
            <person name="Molyneaux N."/>
            <person name="Hujer K.M."/>
            <person name="Lavender H."/>
            <person name="Jamison J.J."/>
            <person name="MacDonald I.J."/>
            <person name="Martin K.M."/>
            <person name="Russo T."/>
            <person name="Campagnari A.A."/>
            <person name="Hujer A.M."/>
            <person name="Bonomo R.A."/>
            <person name="Gill S.R."/>
        </authorList>
    </citation>
    <scope>NUCLEOTIDE SEQUENCE [LARGE SCALE GENOMIC DNA]</scope>
    <source>
        <strain>AB0057</strain>
    </source>
</reference>
<name>RISB_ACIB5</name>
<protein>
    <recommendedName>
        <fullName evidence="1">6,7-dimethyl-8-ribityllumazine synthase</fullName>
        <shortName evidence="1">DMRL synthase</shortName>
        <shortName evidence="1">LS</shortName>
        <shortName evidence="1">Lumazine synthase</shortName>
        <ecNumber evidence="1">2.5.1.78</ecNumber>
    </recommendedName>
</protein>
<dbReference type="EC" id="2.5.1.78" evidence="1"/>
<dbReference type="EMBL" id="CP001182">
    <property type="protein sequence ID" value="ACJ43191.1"/>
    <property type="molecule type" value="Genomic_DNA"/>
</dbReference>
<dbReference type="SMR" id="B7I251"/>
<dbReference type="KEGG" id="abn:AB57_3839"/>
<dbReference type="HOGENOM" id="CLU_089358_1_1_6"/>
<dbReference type="UniPathway" id="UPA00275">
    <property type="reaction ID" value="UER00404"/>
</dbReference>
<dbReference type="Proteomes" id="UP000007094">
    <property type="component" value="Chromosome"/>
</dbReference>
<dbReference type="GO" id="GO:0005829">
    <property type="term" value="C:cytosol"/>
    <property type="evidence" value="ECO:0007669"/>
    <property type="project" value="TreeGrafter"/>
</dbReference>
<dbReference type="GO" id="GO:0009349">
    <property type="term" value="C:riboflavin synthase complex"/>
    <property type="evidence" value="ECO:0007669"/>
    <property type="project" value="InterPro"/>
</dbReference>
<dbReference type="GO" id="GO:0000906">
    <property type="term" value="F:6,7-dimethyl-8-ribityllumazine synthase activity"/>
    <property type="evidence" value="ECO:0007669"/>
    <property type="project" value="UniProtKB-UniRule"/>
</dbReference>
<dbReference type="GO" id="GO:0009231">
    <property type="term" value="P:riboflavin biosynthetic process"/>
    <property type="evidence" value="ECO:0007669"/>
    <property type="project" value="UniProtKB-UniRule"/>
</dbReference>
<dbReference type="CDD" id="cd09209">
    <property type="entry name" value="Lumazine_synthase-I"/>
    <property type="match status" value="1"/>
</dbReference>
<dbReference type="FunFam" id="3.40.50.960:FF:000001">
    <property type="entry name" value="6,7-dimethyl-8-ribityllumazine synthase"/>
    <property type="match status" value="1"/>
</dbReference>
<dbReference type="Gene3D" id="3.40.50.960">
    <property type="entry name" value="Lumazine/riboflavin synthase"/>
    <property type="match status" value="1"/>
</dbReference>
<dbReference type="HAMAP" id="MF_00178">
    <property type="entry name" value="Lumazine_synth"/>
    <property type="match status" value="1"/>
</dbReference>
<dbReference type="InterPro" id="IPR034964">
    <property type="entry name" value="LS"/>
</dbReference>
<dbReference type="InterPro" id="IPR002180">
    <property type="entry name" value="LS/RS"/>
</dbReference>
<dbReference type="InterPro" id="IPR036467">
    <property type="entry name" value="LS/RS_sf"/>
</dbReference>
<dbReference type="NCBIfam" id="TIGR00114">
    <property type="entry name" value="lumazine-synth"/>
    <property type="match status" value="1"/>
</dbReference>
<dbReference type="NCBIfam" id="NF000812">
    <property type="entry name" value="PRK00061.1-4"/>
    <property type="match status" value="1"/>
</dbReference>
<dbReference type="PANTHER" id="PTHR21058:SF0">
    <property type="entry name" value="6,7-DIMETHYL-8-RIBITYLLUMAZINE SYNTHASE"/>
    <property type="match status" value="1"/>
</dbReference>
<dbReference type="PANTHER" id="PTHR21058">
    <property type="entry name" value="6,7-DIMETHYL-8-RIBITYLLUMAZINE SYNTHASE DMRL SYNTHASE LUMAZINE SYNTHASE"/>
    <property type="match status" value="1"/>
</dbReference>
<dbReference type="Pfam" id="PF00885">
    <property type="entry name" value="DMRL_synthase"/>
    <property type="match status" value="1"/>
</dbReference>
<dbReference type="SUPFAM" id="SSF52121">
    <property type="entry name" value="Lumazine synthase"/>
    <property type="match status" value="1"/>
</dbReference>
<proteinExistence type="inferred from homology"/>
<evidence type="ECO:0000255" key="1">
    <source>
        <dbReference type="HAMAP-Rule" id="MF_00178"/>
    </source>
</evidence>
<keyword id="KW-0686">Riboflavin biosynthesis</keyword>
<keyword id="KW-0808">Transferase</keyword>
<gene>
    <name evidence="1" type="primary">ribH</name>
    <name type="ordered locus">AB57_3839</name>
</gene>
<sequence>MAIRRIEGLLHLASEGRYAILVGRFNSFVVEHLLEGAIDTLKRHGVNEDNITVIHAPGAWELPIVAKKLATSNQFDAIIALGAVIRGSTPHFDFVAGECAKGLGVVALESSLPVINGVLTTDSIEQAIERSGTKAGNKGSEAALTAIEMVNLLKAI</sequence>
<comment type="function">
    <text evidence="1">Catalyzes the formation of 6,7-dimethyl-8-ribityllumazine by condensation of 5-amino-6-(D-ribitylamino)uracil with 3,4-dihydroxy-2-butanone 4-phosphate. This is the penultimate step in the biosynthesis of riboflavin.</text>
</comment>
<comment type="catalytic activity">
    <reaction evidence="1">
        <text>(2S)-2-hydroxy-3-oxobutyl phosphate + 5-amino-6-(D-ribitylamino)uracil = 6,7-dimethyl-8-(1-D-ribityl)lumazine + phosphate + 2 H2O + H(+)</text>
        <dbReference type="Rhea" id="RHEA:26152"/>
        <dbReference type="ChEBI" id="CHEBI:15377"/>
        <dbReference type="ChEBI" id="CHEBI:15378"/>
        <dbReference type="ChEBI" id="CHEBI:15934"/>
        <dbReference type="ChEBI" id="CHEBI:43474"/>
        <dbReference type="ChEBI" id="CHEBI:58201"/>
        <dbReference type="ChEBI" id="CHEBI:58830"/>
        <dbReference type="EC" id="2.5.1.78"/>
    </reaction>
</comment>
<comment type="pathway">
    <text evidence="1">Cofactor biosynthesis; riboflavin biosynthesis; riboflavin from 2-hydroxy-3-oxobutyl phosphate and 5-amino-6-(D-ribitylamino)uracil: step 1/2.</text>
</comment>
<comment type="subunit">
    <text evidence="1">Forms an icosahedral capsid composed of 60 subunits, arranged as a dodecamer of pentamers.</text>
</comment>
<comment type="similarity">
    <text evidence="1">Belongs to the DMRL synthase family.</text>
</comment>
<feature type="chain" id="PRO_1000195449" description="6,7-dimethyl-8-ribityllumazine synthase">
    <location>
        <begin position="1"/>
        <end position="156"/>
    </location>
</feature>
<feature type="active site" description="Proton donor" evidence="1">
    <location>
        <position position="91"/>
    </location>
</feature>
<feature type="binding site" evidence="1">
    <location>
        <position position="25"/>
    </location>
    <ligand>
        <name>5-amino-6-(D-ribitylamino)uracil</name>
        <dbReference type="ChEBI" id="CHEBI:15934"/>
    </ligand>
</feature>
<feature type="binding site" evidence="1">
    <location>
        <begin position="59"/>
        <end position="61"/>
    </location>
    <ligand>
        <name>5-amino-6-(D-ribitylamino)uracil</name>
        <dbReference type="ChEBI" id="CHEBI:15934"/>
    </ligand>
</feature>
<feature type="binding site" evidence="1">
    <location>
        <begin position="83"/>
        <end position="85"/>
    </location>
    <ligand>
        <name>5-amino-6-(D-ribitylamino)uracil</name>
        <dbReference type="ChEBI" id="CHEBI:15934"/>
    </ligand>
</feature>
<feature type="binding site" evidence="1">
    <location>
        <begin position="88"/>
        <end position="89"/>
    </location>
    <ligand>
        <name>(2S)-2-hydroxy-3-oxobutyl phosphate</name>
        <dbReference type="ChEBI" id="CHEBI:58830"/>
    </ligand>
</feature>
<feature type="binding site" evidence="1">
    <location>
        <position position="116"/>
    </location>
    <ligand>
        <name>5-amino-6-(D-ribitylamino)uracil</name>
        <dbReference type="ChEBI" id="CHEBI:15934"/>
    </ligand>
</feature>
<feature type="binding site" evidence="1">
    <location>
        <position position="130"/>
    </location>
    <ligand>
        <name>(2S)-2-hydroxy-3-oxobutyl phosphate</name>
        <dbReference type="ChEBI" id="CHEBI:58830"/>
    </ligand>
</feature>
<accession>B7I251</accession>